<keyword id="KW-0106">Calcium</keyword>
<keyword id="KW-0407">Ion channel</keyword>
<keyword id="KW-0406">Ion transport</keyword>
<keyword id="KW-0472">Membrane</keyword>
<keyword id="KW-0479">Metal-binding</keyword>
<keyword id="KW-0539">Nucleus</keyword>
<keyword id="KW-0630">Potassium</keyword>
<keyword id="KW-0631">Potassium channel</keyword>
<keyword id="KW-0633">Potassium transport</keyword>
<keyword id="KW-1267">Proteomics identification</keyword>
<keyword id="KW-1185">Reference proteome</keyword>
<keyword id="KW-0703">Sarcoplasmic reticulum</keyword>
<keyword id="KW-0812">Transmembrane</keyword>
<keyword id="KW-1133">Transmembrane helix</keyword>
<keyword id="KW-0813">Transport</keyword>
<reference key="1">
    <citation type="journal article" date="2004" name="Nat. Genet.">
        <title>Complete sequencing and characterization of 21,243 full-length human cDNAs.</title>
        <authorList>
            <person name="Ota T."/>
            <person name="Suzuki Y."/>
            <person name="Nishikawa T."/>
            <person name="Otsuki T."/>
            <person name="Sugiyama T."/>
            <person name="Irie R."/>
            <person name="Wakamatsu A."/>
            <person name="Hayashi K."/>
            <person name="Sato H."/>
            <person name="Nagai K."/>
            <person name="Kimura K."/>
            <person name="Makita H."/>
            <person name="Sekine M."/>
            <person name="Obayashi M."/>
            <person name="Nishi T."/>
            <person name="Shibahara T."/>
            <person name="Tanaka T."/>
            <person name="Ishii S."/>
            <person name="Yamamoto J."/>
            <person name="Saito K."/>
            <person name="Kawai Y."/>
            <person name="Isono Y."/>
            <person name="Nakamura Y."/>
            <person name="Nagahari K."/>
            <person name="Murakami K."/>
            <person name="Yasuda T."/>
            <person name="Iwayanagi T."/>
            <person name="Wagatsuma M."/>
            <person name="Shiratori A."/>
            <person name="Sudo H."/>
            <person name="Hosoiri T."/>
            <person name="Kaku Y."/>
            <person name="Kodaira H."/>
            <person name="Kondo H."/>
            <person name="Sugawara M."/>
            <person name="Takahashi M."/>
            <person name="Kanda K."/>
            <person name="Yokoi T."/>
            <person name="Furuya T."/>
            <person name="Kikkawa E."/>
            <person name="Omura Y."/>
            <person name="Abe K."/>
            <person name="Kamihara K."/>
            <person name="Katsuta N."/>
            <person name="Sato K."/>
            <person name="Tanikawa M."/>
            <person name="Yamazaki M."/>
            <person name="Ninomiya K."/>
            <person name="Ishibashi T."/>
            <person name="Yamashita H."/>
            <person name="Murakawa K."/>
            <person name="Fujimori K."/>
            <person name="Tanai H."/>
            <person name="Kimata M."/>
            <person name="Watanabe M."/>
            <person name="Hiraoka S."/>
            <person name="Chiba Y."/>
            <person name="Ishida S."/>
            <person name="Ono Y."/>
            <person name="Takiguchi S."/>
            <person name="Watanabe S."/>
            <person name="Yosida M."/>
            <person name="Hotuta T."/>
            <person name="Kusano J."/>
            <person name="Kanehori K."/>
            <person name="Takahashi-Fujii A."/>
            <person name="Hara H."/>
            <person name="Tanase T.-O."/>
            <person name="Nomura Y."/>
            <person name="Togiya S."/>
            <person name="Komai F."/>
            <person name="Hara R."/>
            <person name="Takeuchi K."/>
            <person name="Arita M."/>
            <person name="Imose N."/>
            <person name="Musashino K."/>
            <person name="Yuuki H."/>
            <person name="Oshima A."/>
            <person name="Sasaki N."/>
            <person name="Aotsuka S."/>
            <person name="Yoshikawa Y."/>
            <person name="Matsunawa H."/>
            <person name="Ichihara T."/>
            <person name="Shiohata N."/>
            <person name="Sano S."/>
            <person name="Moriya S."/>
            <person name="Momiyama H."/>
            <person name="Satoh N."/>
            <person name="Takami S."/>
            <person name="Terashima Y."/>
            <person name="Suzuki O."/>
            <person name="Nakagawa S."/>
            <person name="Senoh A."/>
            <person name="Mizoguchi H."/>
            <person name="Goto Y."/>
            <person name="Shimizu F."/>
            <person name="Wakebe H."/>
            <person name="Hishigaki H."/>
            <person name="Watanabe T."/>
            <person name="Sugiyama A."/>
            <person name="Takemoto M."/>
            <person name="Kawakami B."/>
            <person name="Yamazaki M."/>
            <person name="Watanabe K."/>
            <person name="Kumagai A."/>
            <person name="Itakura S."/>
            <person name="Fukuzumi Y."/>
            <person name="Fujimori Y."/>
            <person name="Komiyama M."/>
            <person name="Tashiro H."/>
            <person name="Tanigami A."/>
            <person name="Fujiwara T."/>
            <person name="Ono T."/>
            <person name="Yamada K."/>
            <person name="Fujii Y."/>
            <person name="Ozaki K."/>
            <person name="Hirao M."/>
            <person name="Ohmori Y."/>
            <person name="Kawabata A."/>
            <person name="Hikiji T."/>
            <person name="Kobatake N."/>
            <person name="Inagaki H."/>
            <person name="Ikema Y."/>
            <person name="Okamoto S."/>
            <person name="Okitani R."/>
            <person name="Kawakami T."/>
            <person name="Noguchi S."/>
            <person name="Itoh T."/>
            <person name="Shigeta K."/>
            <person name="Senba T."/>
            <person name="Matsumura K."/>
            <person name="Nakajima Y."/>
            <person name="Mizuno T."/>
            <person name="Morinaga M."/>
            <person name="Sasaki M."/>
            <person name="Togashi T."/>
            <person name="Oyama M."/>
            <person name="Hata H."/>
            <person name="Watanabe M."/>
            <person name="Komatsu T."/>
            <person name="Mizushima-Sugano J."/>
            <person name="Satoh T."/>
            <person name="Shirai Y."/>
            <person name="Takahashi Y."/>
            <person name="Nakagawa K."/>
            <person name="Okumura K."/>
            <person name="Nagase T."/>
            <person name="Nomura N."/>
            <person name="Kikuchi H."/>
            <person name="Masuho Y."/>
            <person name="Yamashita R."/>
            <person name="Nakai K."/>
            <person name="Yada T."/>
            <person name="Nakamura Y."/>
            <person name="Ohara O."/>
            <person name="Isogai T."/>
            <person name="Sugano S."/>
        </authorList>
    </citation>
    <scope>NUCLEOTIDE SEQUENCE [LARGE SCALE MRNA]</scope>
    <source>
        <tissue>Ovary</tissue>
    </source>
</reference>
<reference key="2">
    <citation type="submission" date="2005-07" db="EMBL/GenBank/DDBJ databases">
        <authorList>
            <person name="Mural R.J."/>
            <person name="Istrail S."/>
            <person name="Sutton G.G."/>
            <person name="Florea L."/>
            <person name="Halpern A.L."/>
            <person name="Mobarry C.M."/>
            <person name="Lippert R."/>
            <person name="Walenz B."/>
            <person name="Shatkay H."/>
            <person name="Dew I."/>
            <person name="Miller J.R."/>
            <person name="Flanigan M.J."/>
            <person name="Edwards N.J."/>
            <person name="Bolanos R."/>
            <person name="Fasulo D."/>
            <person name="Halldorsson B.V."/>
            <person name="Hannenhalli S."/>
            <person name="Turner R."/>
            <person name="Yooseph S."/>
            <person name="Lu F."/>
            <person name="Nusskern D.R."/>
            <person name="Shue B.C."/>
            <person name="Zheng X.H."/>
            <person name="Zhong F."/>
            <person name="Delcher A.L."/>
            <person name="Huson D.H."/>
            <person name="Kravitz S.A."/>
            <person name="Mouchard L."/>
            <person name="Reinert K."/>
            <person name="Remington K.A."/>
            <person name="Clark A.G."/>
            <person name="Waterman M.S."/>
            <person name="Eichler E.E."/>
            <person name="Adams M.D."/>
            <person name="Hunkapiller M.W."/>
            <person name="Myers E.W."/>
            <person name="Venter J.C."/>
        </authorList>
    </citation>
    <scope>NUCLEOTIDE SEQUENCE [LARGE SCALE GENOMIC DNA]</scope>
</reference>
<reference key="3">
    <citation type="journal article" date="2004" name="Genome Res.">
        <title>The status, quality, and expansion of the NIH full-length cDNA project: the Mammalian Gene Collection (MGC).</title>
        <authorList>
            <consortium name="The MGC Project Team"/>
        </authorList>
    </citation>
    <scope>NUCLEOTIDE SEQUENCE [LARGE SCALE MRNA]</scope>
    <source>
        <tissue>Eye</tissue>
    </source>
</reference>
<reference key="4">
    <citation type="journal article" date="2007" name="Nature">
        <title>TRIC channels are essential for Ca2+ handling in intracellular stores.</title>
        <authorList>
            <person name="Yazawa M."/>
            <person name="Ferrante C."/>
            <person name="Feng J."/>
            <person name="Mio K."/>
            <person name="Ogura T."/>
            <person name="Zhang M."/>
            <person name="Lin P.-H."/>
            <person name="Pan Z."/>
            <person name="Komazaki S."/>
            <person name="Kato K."/>
            <person name="Nishi M."/>
            <person name="Zhao X."/>
            <person name="Weisleder N."/>
            <person name="Sato C."/>
            <person name="Ma J."/>
            <person name="Takeshima H."/>
        </authorList>
    </citation>
    <scope>TOPOLOGY</scope>
</reference>
<reference key="5">
    <citation type="journal article" date="2024" name="Exp. Mol. Med.">
        <title>Transmembrane proteins with unknown function (TMEMs) as ion channels: electrophysiological properties, structure, and pathophysiological roles.</title>
        <authorList>
            <person name="Kang H."/>
            <person name="Lee C.J."/>
        </authorList>
    </citation>
    <scope>REIVIEW OF FUNCTION</scope>
</reference>
<accession>Q9H6F2</accession>
<accession>A8K9P9</accession>
<evidence type="ECO:0000250" key="1">
    <source>
        <dbReference type="UniProtKB" id="A5A6S6"/>
    </source>
</evidence>
<evidence type="ECO:0000250" key="2">
    <source>
        <dbReference type="UniProtKB" id="Q3TMP8"/>
    </source>
</evidence>
<evidence type="ECO:0000250" key="3">
    <source>
        <dbReference type="UniProtKB" id="Q5ZK43"/>
    </source>
</evidence>
<evidence type="ECO:0000250" key="4">
    <source>
        <dbReference type="UniProtKB" id="Q9NA73"/>
    </source>
</evidence>
<evidence type="ECO:0000255" key="5"/>
<evidence type="ECO:0000256" key="6">
    <source>
        <dbReference type="SAM" id="MobiDB-lite"/>
    </source>
</evidence>
<evidence type="ECO:0000303" key="7">
    <source>
    </source>
</evidence>
<evidence type="ECO:0000305" key="8"/>
<evidence type="ECO:0000312" key="9">
    <source>
        <dbReference type="HGNC" id="HGNC:28462"/>
    </source>
</evidence>
<protein>
    <recommendedName>
        <fullName evidence="8">Trimeric intracellular cation channel type A</fullName>
        <shortName evidence="8">TRIC-A</shortName>
        <shortName evidence="8">TRICA</shortName>
    </recommendedName>
    <alternativeName>
        <fullName>Transmembrane protein 38A</fullName>
    </alternativeName>
</protein>
<organism>
    <name type="scientific">Homo sapiens</name>
    <name type="common">Human</name>
    <dbReference type="NCBI Taxonomy" id="9606"/>
    <lineage>
        <taxon>Eukaryota</taxon>
        <taxon>Metazoa</taxon>
        <taxon>Chordata</taxon>
        <taxon>Craniata</taxon>
        <taxon>Vertebrata</taxon>
        <taxon>Euteleostomi</taxon>
        <taxon>Mammalia</taxon>
        <taxon>Eutheria</taxon>
        <taxon>Euarchontoglires</taxon>
        <taxon>Primates</taxon>
        <taxon>Haplorrhini</taxon>
        <taxon>Catarrhini</taxon>
        <taxon>Hominidae</taxon>
        <taxon>Homo</taxon>
    </lineage>
</organism>
<feature type="chain" id="PRO_0000271068" description="Trimeric intracellular cation channel type A">
    <location>
        <begin position="1"/>
        <end position="299"/>
    </location>
</feature>
<feature type="topological domain" description="Lumenal" evidence="8">
    <location>
        <begin position="1"/>
        <end position="18"/>
    </location>
</feature>
<feature type="transmembrane region" description="Helical;Name=1" evidence="5">
    <location>
        <begin position="19"/>
        <end position="39"/>
    </location>
</feature>
<feature type="topological domain" description="Cytoplasmic" evidence="8">
    <location>
        <begin position="40"/>
        <end position="51"/>
    </location>
</feature>
<feature type="transmembrane region" description="Helical;Name=2" evidence="5">
    <location>
        <begin position="52"/>
        <end position="72"/>
    </location>
</feature>
<feature type="topological domain" description="Lumenal" evidence="8">
    <location>
        <begin position="73"/>
        <end position="85"/>
    </location>
</feature>
<feature type="transmembrane region" description="Helical;Name=3" evidence="5">
    <location>
        <begin position="86"/>
        <end position="106"/>
    </location>
</feature>
<feature type="topological domain" description="Cytoplasmic" evidence="8">
    <location>
        <begin position="107"/>
        <end position="144"/>
    </location>
</feature>
<feature type="transmembrane region" description="Helical;Name=4" evidence="5">
    <location>
        <begin position="145"/>
        <end position="165"/>
    </location>
</feature>
<feature type="topological domain" description="Lumenal" evidence="8">
    <location>
        <begin position="166"/>
        <end position="178"/>
    </location>
</feature>
<feature type="transmembrane region" description="Helical;Name=5" evidence="5">
    <location>
        <begin position="179"/>
        <end position="199"/>
    </location>
</feature>
<feature type="topological domain" description="Cytoplasmic" evidence="8">
    <location>
        <begin position="200"/>
        <end position="209"/>
    </location>
</feature>
<feature type="transmembrane region" description="Helical;Name=6" evidence="5">
    <location>
        <begin position="210"/>
        <end position="230"/>
    </location>
</feature>
<feature type="topological domain" description="Lumenal" evidence="8">
    <location>
        <begin position="231"/>
        <end position="234"/>
    </location>
</feature>
<feature type="transmembrane region" description="Helical;Name=7" evidence="5">
    <location>
        <begin position="235"/>
        <end position="255"/>
    </location>
</feature>
<feature type="topological domain" description="Cytoplasmic" evidence="8">
    <location>
        <begin position="256"/>
        <end position="299"/>
    </location>
</feature>
<feature type="region of interest" description="Disordered" evidence="6">
    <location>
        <begin position="260"/>
        <end position="299"/>
    </location>
</feature>
<feature type="compositionally biased region" description="Basic and acidic residues" evidence="6">
    <location>
        <begin position="281"/>
        <end position="290"/>
    </location>
</feature>
<feature type="binding site" evidence="3">
    <location>
        <position position="74"/>
    </location>
    <ligand>
        <name>Ca(2+)</name>
        <dbReference type="ChEBI" id="CHEBI:29108"/>
    </ligand>
</feature>
<feature type="binding site" evidence="4">
    <location>
        <position position="122"/>
    </location>
    <ligand>
        <name>a 1,2-diacyl-sn-glycero-3-phospho-(1D-myo-inositol-4,5-bisphosphate)</name>
        <dbReference type="ChEBI" id="CHEBI:58456"/>
    </ligand>
</feature>
<feature type="binding site" evidence="4">
    <location>
        <position position="126"/>
    </location>
    <ligand>
        <name>a 1,2-diacyl-sn-glycero-3-phospho-(1D-myo-inositol-4,5-bisphosphate)</name>
        <dbReference type="ChEBI" id="CHEBI:58456"/>
    </ligand>
</feature>
<comment type="function">
    <text evidence="1">Intracellular monovalent cation channel required for maintenance of rapid intracellular calcium release. Acts as a potassium counter-ion channel that functions in synchronization with calcium release from intracellular stores (By similarity). Opened by a change of voltage within the sarcoplasmic reticulum lumen (By similarity).</text>
</comment>
<comment type="catalytic activity">
    <reaction evidence="1 2">
        <text>K(+)(in) = K(+)(out)</text>
        <dbReference type="Rhea" id="RHEA:29463"/>
        <dbReference type="ChEBI" id="CHEBI:29103"/>
    </reaction>
</comment>
<comment type="activity regulation">
    <text evidence="3">Channel activity is activated by a change of voltage within the sarcoplasmic reticulum lumen and blocked by luminal high Ca(2+) levels.</text>
</comment>
<comment type="subunit">
    <text evidence="3">Homotrimer; conformation seems to be controled by binding to diacylglycerol (DAG).</text>
</comment>
<comment type="subcellular location">
    <subcellularLocation>
        <location evidence="1">Sarcoplasmic reticulum membrane</location>
        <topology evidence="1">Multi-pass membrane protein</topology>
    </subcellularLocation>
    <subcellularLocation>
        <location evidence="1">Nucleus membrane</location>
    </subcellularLocation>
</comment>
<comment type="similarity">
    <text evidence="8">Belongs to the TMEM38 family.</text>
</comment>
<gene>
    <name evidence="9" type="primary">TMEM38A</name>
    <name evidence="7" type="synonym">TRICA</name>
</gene>
<dbReference type="EMBL" id="AK025981">
    <property type="protein sequence ID" value="BAB15307.1"/>
    <property type="molecule type" value="mRNA"/>
</dbReference>
<dbReference type="EMBL" id="AK292764">
    <property type="protein sequence ID" value="BAF85453.1"/>
    <property type="molecule type" value="mRNA"/>
</dbReference>
<dbReference type="EMBL" id="CH471106">
    <property type="protein sequence ID" value="EAW84559.1"/>
    <property type="molecule type" value="Genomic_DNA"/>
</dbReference>
<dbReference type="EMBL" id="BC001195">
    <property type="protein sequence ID" value="AAH01195.1"/>
    <property type="molecule type" value="mRNA"/>
</dbReference>
<dbReference type="CCDS" id="CCDS12349.1"/>
<dbReference type="RefSeq" id="NP_076979.1">
    <property type="nucleotide sequence ID" value="NM_024074.4"/>
</dbReference>
<dbReference type="SMR" id="Q9H6F2"/>
<dbReference type="BioGRID" id="122504">
    <property type="interactions" value="11"/>
</dbReference>
<dbReference type="FunCoup" id="Q9H6F2">
    <property type="interactions" value="290"/>
</dbReference>
<dbReference type="IntAct" id="Q9H6F2">
    <property type="interactions" value="6"/>
</dbReference>
<dbReference type="STRING" id="9606.ENSP00000187762"/>
<dbReference type="iPTMnet" id="Q9H6F2"/>
<dbReference type="PhosphoSitePlus" id="Q9H6F2"/>
<dbReference type="BioMuta" id="TMEM38A"/>
<dbReference type="DMDM" id="74733603"/>
<dbReference type="jPOST" id="Q9H6F2"/>
<dbReference type="MassIVE" id="Q9H6F2"/>
<dbReference type="PaxDb" id="9606-ENSP00000187762"/>
<dbReference type="PeptideAtlas" id="Q9H6F2"/>
<dbReference type="ProteomicsDB" id="80984"/>
<dbReference type="Antibodypedia" id="27435">
    <property type="antibodies" value="131 antibodies from 26 providers"/>
</dbReference>
<dbReference type="DNASU" id="79041"/>
<dbReference type="Ensembl" id="ENST00000187762.7">
    <property type="protein sequence ID" value="ENSP00000187762.1"/>
    <property type="gene ID" value="ENSG00000072954.7"/>
</dbReference>
<dbReference type="GeneID" id="79041"/>
<dbReference type="KEGG" id="hsa:79041"/>
<dbReference type="MANE-Select" id="ENST00000187762.7">
    <property type="protein sequence ID" value="ENSP00000187762.1"/>
    <property type="RefSeq nucleotide sequence ID" value="NM_024074.4"/>
    <property type="RefSeq protein sequence ID" value="NP_076979.1"/>
</dbReference>
<dbReference type="UCSC" id="uc002nes.4">
    <property type="organism name" value="human"/>
</dbReference>
<dbReference type="AGR" id="HGNC:28462"/>
<dbReference type="CTD" id="79041"/>
<dbReference type="DisGeNET" id="79041"/>
<dbReference type="GeneCards" id="TMEM38A"/>
<dbReference type="HGNC" id="HGNC:28462">
    <property type="gene designation" value="TMEM38A"/>
</dbReference>
<dbReference type="HPA" id="ENSG00000072954">
    <property type="expression patterns" value="Tissue enhanced (skeletal muscle, tongue)"/>
</dbReference>
<dbReference type="MIM" id="611235">
    <property type="type" value="gene"/>
</dbReference>
<dbReference type="neXtProt" id="NX_Q9H6F2"/>
<dbReference type="OpenTargets" id="ENSG00000072954"/>
<dbReference type="PharmGKB" id="PA134891982"/>
<dbReference type="VEuPathDB" id="HostDB:ENSG00000072954"/>
<dbReference type="eggNOG" id="KOG3944">
    <property type="taxonomic scope" value="Eukaryota"/>
</dbReference>
<dbReference type="GeneTree" id="ENSGT00390000018845"/>
<dbReference type="HOGENOM" id="CLU_076376_0_1_1"/>
<dbReference type="InParanoid" id="Q9H6F2"/>
<dbReference type="OMA" id="FSKMAMF"/>
<dbReference type="OrthoDB" id="195817at2759"/>
<dbReference type="PAN-GO" id="Q9H6F2">
    <property type="GO annotations" value="0 GO annotations based on evolutionary models"/>
</dbReference>
<dbReference type="PhylomeDB" id="Q9H6F2"/>
<dbReference type="TreeFam" id="TF313483"/>
<dbReference type="PathwayCommons" id="Q9H6F2"/>
<dbReference type="SignaLink" id="Q9H6F2"/>
<dbReference type="BioGRID-ORCS" id="79041">
    <property type="hits" value="28 hits in 1152 CRISPR screens"/>
</dbReference>
<dbReference type="ChiTaRS" id="TMEM38A">
    <property type="organism name" value="human"/>
</dbReference>
<dbReference type="GenomeRNAi" id="79041"/>
<dbReference type="Pharos" id="Q9H6F2">
    <property type="development level" value="Tbio"/>
</dbReference>
<dbReference type="PRO" id="PR:Q9H6F2"/>
<dbReference type="Proteomes" id="UP000005640">
    <property type="component" value="Chromosome 19"/>
</dbReference>
<dbReference type="RNAct" id="Q9H6F2">
    <property type="molecule type" value="protein"/>
</dbReference>
<dbReference type="Bgee" id="ENSG00000072954">
    <property type="expression patterns" value="Expressed in hindlimb stylopod muscle and 135 other cell types or tissues"/>
</dbReference>
<dbReference type="ExpressionAtlas" id="Q9H6F2">
    <property type="expression patterns" value="baseline and differential"/>
</dbReference>
<dbReference type="GO" id="GO:0070062">
    <property type="term" value="C:extracellular exosome"/>
    <property type="evidence" value="ECO:0007005"/>
    <property type="project" value="UniProtKB"/>
</dbReference>
<dbReference type="GO" id="GO:0031965">
    <property type="term" value="C:nuclear membrane"/>
    <property type="evidence" value="ECO:0000250"/>
    <property type="project" value="UniProtKB"/>
</dbReference>
<dbReference type="GO" id="GO:0033017">
    <property type="term" value="C:sarcoplasmic reticulum membrane"/>
    <property type="evidence" value="ECO:0000250"/>
    <property type="project" value="UniProtKB"/>
</dbReference>
<dbReference type="GO" id="GO:0042802">
    <property type="term" value="F:identical protein binding"/>
    <property type="evidence" value="ECO:0007669"/>
    <property type="project" value="Ensembl"/>
</dbReference>
<dbReference type="GO" id="GO:0046872">
    <property type="term" value="F:metal ion binding"/>
    <property type="evidence" value="ECO:0007669"/>
    <property type="project" value="UniProtKB-KW"/>
</dbReference>
<dbReference type="GO" id="GO:0005267">
    <property type="term" value="F:potassium channel activity"/>
    <property type="evidence" value="ECO:0000250"/>
    <property type="project" value="UniProtKB"/>
</dbReference>
<dbReference type="GO" id="GO:0071313">
    <property type="term" value="P:cellular response to caffeine"/>
    <property type="evidence" value="ECO:0007669"/>
    <property type="project" value="Ensembl"/>
</dbReference>
<dbReference type="GO" id="GO:0007029">
    <property type="term" value="P:endoplasmic reticulum organization"/>
    <property type="evidence" value="ECO:0007669"/>
    <property type="project" value="Ensembl"/>
</dbReference>
<dbReference type="GO" id="GO:0010881">
    <property type="term" value="P:regulation of cardiac muscle contraction by regulation of the release of sequestered calcium ion"/>
    <property type="evidence" value="ECO:0007669"/>
    <property type="project" value="Ensembl"/>
</dbReference>
<dbReference type="GO" id="GO:0051279">
    <property type="term" value="P:regulation of release of sequestered calcium ion into cytosol"/>
    <property type="evidence" value="ECO:0000250"/>
    <property type="project" value="UniProtKB"/>
</dbReference>
<dbReference type="GO" id="GO:0014808">
    <property type="term" value="P:release of sequestered calcium ion into cytosol by sarcoplasmic reticulum"/>
    <property type="evidence" value="ECO:0007669"/>
    <property type="project" value="Ensembl"/>
</dbReference>
<dbReference type="InterPro" id="IPR007866">
    <property type="entry name" value="TRIC_channel"/>
</dbReference>
<dbReference type="PANTHER" id="PTHR12454">
    <property type="entry name" value="TRIMERIC INTRACELLULAR CATION CHANNEL"/>
    <property type="match status" value="1"/>
</dbReference>
<dbReference type="PANTHER" id="PTHR12454:SF3">
    <property type="entry name" value="TRIMERIC INTRACELLULAR CATION CHANNEL TYPE A"/>
    <property type="match status" value="1"/>
</dbReference>
<dbReference type="Pfam" id="PF05197">
    <property type="entry name" value="TRIC"/>
    <property type="match status" value="1"/>
</dbReference>
<name>TM38A_HUMAN</name>
<proteinExistence type="evidence at protein level"/>
<sequence>MELLSALSLGELALSFSRVPLFPVFDLSYFIVSILYLKYEPGAVELSRRHPIASWLCAMLHCFGSYILADLLLGEPLIDYFSNNSSILLASAVWYLIFFCPLDLFYKCVCFLPVKLIFVAMKEVVRVRKIAVGIHHAHHHYHHGWFVMIATGWVKGSGVALMSNFEQLLRGVWKPETNEILHMSFPTKASLYGAILFTLQQTRWLPVSKASLIFIFTLFMVSCKVFLTATHSHSSPFDALEGYICPVLFGSACGGDHHHDNHGGSHSGGGPGAQHSAMPAKSKEELSEGSRKKKAKKAD</sequence>